<organism>
    <name type="scientific">Kluyveromyces lactis (strain ATCC 8585 / CBS 2359 / DSM 70799 / NBRC 1267 / NRRL Y-1140 / WM37)</name>
    <name type="common">Yeast</name>
    <name type="synonym">Candida sphaerica</name>
    <dbReference type="NCBI Taxonomy" id="284590"/>
    <lineage>
        <taxon>Eukaryota</taxon>
        <taxon>Fungi</taxon>
        <taxon>Dikarya</taxon>
        <taxon>Ascomycota</taxon>
        <taxon>Saccharomycotina</taxon>
        <taxon>Saccharomycetes</taxon>
        <taxon>Saccharomycetales</taxon>
        <taxon>Saccharomycetaceae</taxon>
        <taxon>Kluyveromyces</taxon>
    </lineage>
</organism>
<name>RNY1_KLULA</name>
<reference key="1">
    <citation type="journal article" date="2004" name="Nature">
        <title>Genome evolution in yeasts.</title>
        <authorList>
            <person name="Dujon B."/>
            <person name="Sherman D."/>
            <person name="Fischer G."/>
            <person name="Durrens P."/>
            <person name="Casaregola S."/>
            <person name="Lafontaine I."/>
            <person name="de Montigny J."/>
            <person name="Marck C."/>
            <person name="Neuveglise C."/>
            <person name="Talla E."/>
            <person name="Goffard N."/>
            <person name="Frangeul L."/>
            <person name="Aigle M."/>
            <person name="Anthouard V."/>
            <person name="Babour A."/>
            <person name="Barbe V."/>
            <person name="Barnay S."/>
            <person name="Blanchin S."/>
            <person name="Beckerich J.-M."/>
            <person name="Beyne E."/>
            <person name="Bleykasten C."/>
            <person name="Boisrame A."/>
            <person name="Boyer J."/>
            <person name="Cattolico L."/>
            <person name="Confanioleri F."/>
            <person name="de Daruvar A."/>
            <person name="Despons L."/>
            <person name="Fabre E."/>
            <person name="Fairhead C."/>
            <person name="Ferry-Dumazet H."/>
            <person name="Groppi A."/>
            <person name="Hantraye F."/>
            <person name="Hennequin C."/>
            <person name="Jauniaux N."/>
            <person name="Joyet P."/>
            <person name="Kachouri R."/>
            <person name="Kerrest A."/>
            <person name="Koszul R."/>
            <person name="Lemaire M."/>
            <person name="Lesur I."/>
            <person name="Ma L."/>
            <person name="Muller H."/>
            <person name="Nicaud J.-M."/>
            <person name="Nikolski M."/>
            <person name="Oztas S."/>
            <person name="Ozier-Kalogeropoulos O."/>
            <person name="Pellenz S."/>
            <person name="Potier S."/>
            <person name="Richard G.-F."/>
            <person name="Straub M.-L."/>
            <person name="Suleau A."/>
            <person name="Swennen D."/>
            <person name="Tekaia F."/>
            <person name="Wesolowski-Louvel M."/>
            <person name="Westhof E."/>
            <person name="Wirth B."/>
            <person name="Zeniou-Meyer M."/>
            <person name="Zivanovic Y."/>
            <person name="Bolotin-Fukuhara M."/>
            <person name="Thierry A."/>
            <person name="Bouchier C."/>
            <person name="Caudron B."/>
            <person name="Scarpelli C."/>
            <person name="Gaillardin C."/>
            <person name="Weissenbach J."/>
            <person name="Wincker P."/>
            <person name="Souciet J.-L."/>
        </authorList>
    </citation>
    <scope>NUCLEOTIDE SEQUENCE [LARGE SCALE GENOMIC DNA]</scope>
    <source>
        <strain>ATCC 8585 / CBS 2359 / DSM 70799 / NBRC 1267 / NRRL Y-1140 / WM37</strain>
    </source>
</reference>
<accession>Q6CRT6</accession>
<sequence length="425" mass="48137">MLLNKGLLASLLAYTTTAFDLQHIFYKEQYSCPISLPASCSNNTEIKDSCCFEFPGGIMLQTQFWDYIPPKGVSDPDELVRHLGPLDSFTNHGLWPDNCDGTYAQFCNRESNIDDVWHLLNDDQFNGRDDLPINGTDLLETMDMYWKSNTGDDESLWVHEYNKHGTCIRTLYPDCYKKWGVAGNSKKQAVYDYFRIAMKLFHDKDTYQTLKSAGIEPSVEKSYTKLEISNALKEGHSGEVVHFLCDRHGSLNQIWYFHSLKGSLLGEKFVPISALPKGSNCPDDNIKWYPKGHVPSSYRPPNGNHPGTRGVVRIGNGKGFLIKNGHWYLKGTPANFFLIEAPFGNYYLKTRMGYCGIDNSNKVLACNKNVAQAAQFEYDAKKGYIGYNGAYDWYATKYPRGNQQAPVYAGSNDDGYNFQLKFVKA</sequence>
<feature type="signal peptide" evidence="2">
    <location>
        <begin position="1"/>
        <end position="18"/>
    </location>
</feature>
<feature type="chain" id="PRO_0000043256" description="Ribonuclease T2-like">
    <location>
        <begin position="19"/>
        <end position="425"/>
    </location>
</feature>
<feature type="active site" evidence="3">
    <location>
        <position position="92"/>
    </location>
</feature>
<feature type="active site" evidence="3">
    <location>
        <position position="160"/>
    </location>
</feature>
<feature type="active site" evidence="3">
    <location>
        <position position="164"/>
    </location>
</feature>
<feature type="glycosylation site" description="N-linked (GlcNAc...) asparagine" evidence="2">
    <location>
        <position position="42"/>
    </location>
</feature>
<feature type="glycosylation site" description="N-linked (GlcNAc...) asparagine" evidence="2">
    <location>
        <position position="134"/>
    </location>
</feature>
<feature type="disulfide bond" evidence="1">
    <location>
        <begin position="32"/>
        <end position="51"/>
    </location>
</feature>
<feature type="disulfide bond" evidence="1">
    <location>
        <begin position="40"/>
        <end position="99"/>
    </location>
</feature>
<feature type="disulfide bond" evidence="1">
    <location>
        <begin position="50"/>
        <end position="175"/>
    </location>
</feature>
<feature type="disulfide bond" evidence="1">
    <location>
        <begin position="107"/>
        <end position="167"/>
    </location>
</feature>
<feature type="disulfide bond" evidence="1">
    <location>
        <begin position="245"/>
        <end position="281"/>
    </location>
</feature>
<gene>
    <name type="primary">RNY1</name>
    <name type="ordered locus">KLLA0D06567g</name>
</gene>
<comment type="function">
    <text evidence="1">Rnase which modulates cell survival under stress conditions. Released from the vacuole to the cytoplasm during stress to promote tRNA and rRNA cleavage and to activate separately a downstream pathway that promotes cell death. Involved in cell size, vacuolar morphology and growth at high temperatures and high salt concentration (By similarity).</text>
</comment>
<comment type="catalytic activity">
    <reaction evidence="3">
        <text>a ribonucleotidyl-ribonucleotide-RNA + H2O = a 3'-end 3'-phospho-ribonucleotide-RNA + a 5'-end dephospho-ribonucleoside-RNA + H(+)</text>
        <dbReference type="Rhea" id="RHEA:68052"/>
        <dbReference type="Rhea" id="RHEA-COMP:10463"/>
        <dbReference type="Rhea" id="RHEA-COMP:13936"/>
        <dbReference type="Rhea" id="RHEA-COMP:17355"/>
        <dbReference type="ChEBI" id="CHEBI:15377"/>
        <dbReference type="ChEBI" id="CHEBI:15378"/>
        <dbReference type="ChEBI" id="CHEBI:83062"/>
        <dbReference type="ChEBI" id="CHEBI:138284"/>
        <dbReference type="ChEBI" id="CHEBI:173118"/>
        <dbReference type="EC" id="4.6.1.19"/>
    </reaction>
</comment>
<comment type="subcellular location">
    <subcellularLocation>
        <location>Vacuole lumen</location>
    </subcellularLocation>
    <subcellularLocation>
        <location>Cytoplasm</location>
    </subcellularLocation>
    <text evidence="1">Is released from the vacuole to the cytoplasm during stress conditions like oxidative stress or stationary phase stress.</text>
</comment>
<comment type="similarity">
    <text evidence="4">Belongs to the RNase T2 family.</text>
</comment>
<keyword id="KW-0963">Cytoplasm</keyword>
<keyword id="KW-1015">Disulfide bond</keyword>
<keyword id="KW-0255">Endonuclease</keyword>
<keyword id="KW-0325">Glycoprotein</keyword>
<keyword id="KW-0378">Hydrolase</keyword>
<keyword id="KW-0456">Lyase</keyword>
<keyword id="KW-0540">Nuclease</keyword>
<keyword id="KW-1185">Reference proteome</keyword>
<keyword id="KW-0732">Signal</keyword>
<keyword id="KW-0926">Vacuole</keyword>
<proteinExistence type="inferred from homology"/>
<dbReference type="EC" id="4.6.1.19"/>
<dbReference type="EMBL" id="CR382124">
    <property type="protein sequence ID" value="CAH00449.1"/>
    <property type="molecule type" value="Genomic_DNA"/>
</dbReference>
<dbReference type="RefSeq" id="XP_453353.1">
    <property type="nucleotide sequence ID" value="XM_453353.1"/>
</dbReference>
<dbReference type="SMR" id="Q6CRT6"/>
<dbReference type="FunCoup" id="Q6CRT6">
    <property type="interactions" value="168"/>
</dbReference>
<dbReference type="STRING" id="284590.Q6CRT6"/>
<dbReference type="GlyCosmos" id="Q6CRT6">
    <property type="glycosylation" value="2 sites, No reported glycans"/>
</dbReference>
<dbReference type="PaxDb" id="284590-Q6CRT6"/>
<dbReference type="KEGG" id="kla:KLLA0_D06567g"/>
<dbReference type="eggNOG" id="KOG1642">
    <property type="taxonomic scope" value="Eukaryota"/>
</dbReference>
<dbReference type="HOGENOM" id="CLU_037966_0_1_1"/>
<dbReference type="InParanoid" id="Q6CRT6"/>
<dbReference type="OMA" id="HESLWIH"/>
<dbReference type="Proteomes" id="UP000000598">
    <property type="component" value="Chromosome D"/>
</dbReference>
<dbReference type="GO" id="GO:0005576">
    <property type="term" value="C:extracellular region"/>
    <property type="evidence" value="ECO:0007669"/>
    <property type="project" value="TreeGrafter"/>
</dbReference>
<dbReference type="GO" id="GO:0005775">
    <property type="term" value="C:vacuolar lumen"/>
    <property type="evidence" value="ECO:0007669"/>
    <property type="project" value="UniProtKB-SubCell"/>
</dbReference>
<dbReference type="GO" id="GO:0033897">
    <property type="term" value="F:ribonuclease T2 activity"/>
    <property type="evidence" value="ECO:0007669"/>
    <property type="project" value="UniProtKB-EC"/>
</dbReference>
<dbReference type="GO" id="GO:0003723">
    <property type="term" value="F:RNA binding"/>
    <property type="evidence" value="ECO:0007669"/>
    <property type="project" value="InterPro"/>
</dbReference>
<dbReference type="GO" id="GO:0006401">
    <property type="term" value="P:RNA catabolic process"/>
    <property type="evidence" value="ECO:0007669"/>
    <property type="project" value="TreeGrafter"/>
</dbReference>
<dbReference type="CDD" id="cd01061">
    <property type="entry name" value="RNase_T2_euk"/>
    <property type="match status" value="1"/>
</dbReference>
<dbReference type="FunFam" id="3.90.730.10:FF:000004">
    <property type="entry name" value="Ribonuclease T2-like"/>
    <property type="match status" value="1"/>
</dbReference>
<dbReference type="Gene3D" id="3.90.730.10">
    <property type="entry name" value="Ribonuclease T2-like"/>
    <property type="match status" value="1"/>
</dbReference>
<dbReference type="InterPro" id="IPR033697">
    <property type="entry name" value="Ribonuclease_T2_eukaryotic"/>
</dbReference>
<dbReference type="InterPro" id="IPR001568">
    <property type="entry name" value="RNase_T2-like"/>
</dbReference>
<dbReference type="InterPro" id="IPR036430">
    <property type="entry name" value="RNase_T2-like_sf"/>
</dbReference>
<dbReference type="InterPro" id="IPR033130">
    <property type="entry name" value="RNase_T2_His_AS_2"/>
</dbReference>
<dbReference type="PANTHER" id="PTHR11240">
    <property type="entry name" value="RIBONUCLEASE T2"/>
    <property type="match status" value="1"/>
</dbReference>
<dbReference type="PANTHER" id="PTHR11240:SF22">
    <property type="entry name" value="RIBONUCLEASE T2"/>
    <property type="match status" value="1"/>
</dbReference>
<dbReference type="Pfam" id="PF00445">
    <property type="entry name" value="Ribonuclease_T2"/>
    <property type="match status" value="1"/>
</dbReference>
<dbReference type="Pfam" id="PF25488">
    <property type="entry name" value="RNaseT2L_C"/>
    <property type="match status" value="1"/>
</dbReference>
<dbReference type="SUPFAM" id="SSF55895">
    <property type="entry name" value="Ribonuclease Rh-like"/>
    <property type="match status" value="1"/>
</dbReference>
<dbReference type="PROSITE" id="PS00531">
    <property type="entry name" value="RNASE_T2_2"/>
    <property type="match status" value="1"/>
</dbReference>
<evidence type="ECO:0000250" key="1"/>
<evidence type="ECO:0000255" key="2"/>
<evidence type="ECO:0000255" key="3">
    <source>
        <dbReference type="PROSITE-ProRule" id="PRU10046"/>
    </source>
</evidence>
<evidence type="ECO:0000305" key="4"/>
<protein>
    <recommendedName>
        <fullName>Ribonuclease T2-like</fullName>
        <shortName>RNase T2-like</shortName>
        <ecNumber>4.6.1.19</ecNumber>
    </recommendedName>
</protein>